<dbReference type="EC" id="2.7.7.65" evidence="1"/>
<dbReference type="EMBL" id="UFVE01000002">
    <property type="protein sequence ID" value="SUX93681.1"/>
    <property type="molecule type" value="Genomic_DNA"/>
</dbReference>
<dbReference type="RefSeq" id="WP_016421262.1">
    <property type="nucleotide sequence ID" value="NZ_KE150243.1"/>
</dbReference>
<dbReference type="PDB" id="6WT9">
    <property type="method" value="X-ray"/>
    <property type="resolution" value="2.30 A"/>
    <property type="chains" value="A=2-351"/>
</dbReference>
<dbReference type="PDBsum" id="6WT9"/>
<dbReference type="SMR" id="A0A381HBN1"/>
<dbReference type="STRING" id="45242.SAMN05444420_1206"/>
<dbReference type="GeneID" id="85018443"/>
<dbReference type="GO" id="GO:0052621">
    <property type="term" value="F:diguanylate cyclase activity"/>
    <property type="evidence" value="ECO:0007669"/>
    <property type="project" value="UniProtKB-EC"/>
</dbReference>
<dbReference type="GO" id="GO:0005525">
    <property type="term" value="F:GTP binding"/>
    <property type="evidence" value="ECO:0007669"/>
    <property type="project" value="UniProtKB-KW"/>
</dbReference>
<dbReference type="GO" id="GO:0051607">
    <property type="term" value="P:defense response to virus"/>
    <property type="evidence" value="ECO:0007669"/>
    <property type="project" value="UniProtKB-KW"/>
</dbReference>
<dbReference type="InterPro" id="IPR043519">
    <property type="entry name" value="NT_sf"/>
</dbReference>
<dbReference type="InterPro" id="IPR002934">
    <property type="entry name" value="Polymerase_NTP_transf_dom"/>
</dbReference>
<dbReference type="Pfam" id="PF01909">
    <property type="entry name" value="NTP_transf_2"/>
    <property type="match status" value="1"/>
</dbReference>
<dbReference type="SUPFAM" id="SSF81301">
    <property type="entry name" value="Nucleotidyltransferase"/>
    <property type="match status" value="1"/>
</dbReference>
<name>CDNE_CAPGB</name>
<reference key="1">
    <citation type="submission" date="2018-06" db="EMBL/GenBank/DDBJ databases">
        <authorList>
            <consortium name="Pathogen Informatics"/>
            <person name="Doyle S."/>
        </authorList>
    </citation>
    <scope>NUCLEOTIDE SEQUENCE [LARGE SCALE GENOMIC DNA]</scope>
    <source>
        <strain>ATCC 51502 / DSM 11449 / JCM 8566 / LMG 16022 / NCTC 12948 / B0611</strain>
    </source>
</reference>
<reference key="2">
    <citation type="journal article" date="2020" name="Nat. Microbiol.">
        <title>Diversity and classification of cyclic-oligonucleotide-based anti-phage signalling systems.</title>
        <authorList>
            <person name="Millman A."/>
            <person name="Melamed S."/>
            <person name="Amitai G."/>
            <person name="Sorek R."/>
        </authorList>
    </citation>
    <scope>CLASSIFICATION AND NOMENCLATURE</scope>
</reference>
<reference evidence="6" key="3">
    <citation type="journal article" date="2020" name="Nature">
        <title>STING cyclic dinucleotide sensing originated in bacteria.</title>
        <authorList>
            <person name="Morehouse B.R."/>
            <person name="Govande A.A."/>
            <person name="Millman A."/>
            <person name="Keszei A.F.A."/>
            <person name="Lowey B."/>
            <person name="Ofir G."/>
            <person name="Shao S."/>
            <person name="Sorek R."/>
            <person name="Kranzusch P.J."/>
        </authorList>
    </citation>
    <scope>X-RAY CRYSTALLOGRAPHY (2.30 ANGSTROMS) OF 2-351</scope>
    <scope>FUNCTION</scope>
    <scope>CATALYTIC ACTIVITY</scope>
    <scope>SUBSTRATE SPECIFICITY</scope>
</reference>
<organism>
    <name type="scientific">Capnocytophaga granulosa (strain ATCC 51502 / DSM 11449 / JCM 8566 / LMG 16022 / NCTC 12948 / B0611)</name>
    <dbReference type="NCBI Taxonomy" id="641143"/>
    <lineage>
        <taxon>Bacteria</taxon>
        <taxon>Pseudomonadati</taxon>
        <taxon>Bacteroidota</taxon>
        <taxon>Flavobacteriia</taxon>
        <taxon>Flavobacteriales</taxon>
        <taxon>Flavobacteriaceae</taxon>
        <taxon>Capnocytophaga</taxon>
    </lineage>
</organism>
<protein>
    <recommendedName>
        <fullName evidence="3">c-di-GMP synthase</fullName>
        <ecNumber evidence="1">2.7.7.65</ecNumber>
    </recommendedName>
    <alternativeName>
        <fullName evidence="3">CgCdnE</fullName>
    </alternativeName>
    <alternativeName>
        <fullName>cGAS/DncV-like nucleotidyltransferase</fullName>
        <shortName>CD-NTase</shortName>
    </alternativeName>
</protein>
<evidence type="ECO:0000269" key="1">
    <source>
    </source>
</evidence>
<evidence type="ECO:0000303" key="2">
    <source>
    </source>
</evidence>
<evidence type="ECO:0000303" key="3">
    <source>
    </source>
</evidence>
<evidence type="ECO:0000305" key="4"/>
<evidence type="ECO:0000305" key="5">
    <source>
    </source>
</evidence>
<evidence type="ECO:0007744" key="6">
    <source>
        <dbReference type="PDB" id="6WT9"/>
    </source>
</evidence>
<evidence type="ECO:0007829" key="7">
    <source>
        <dbReference type="PDB" id="6WT9"/>
    </source>
</evidence>
<proteinExistence type="evidence at protein level"/>
<keyword id="KW-0002">3D-structure</keyword>
<keyword id="KW-0051">Antiviral defense</keyword>
<keyword id="KW-0342">GTP-binding</keyword>
<keyword id="KW-0547">Nucleotide-binding</keyword>
<keyword id="KW-0548">Nucleotidyltransferase</keyword>
<keyword id="KW-0808">Transferase</keyword>
<sequence length="351" mass="41130">MEKKNYSALFENLQNRSNPEKLQEITTKFFSDNPDVKYNDVLKYITLAMNGVSPEYTNKSREAGEKVKLHLQDILLDVEYQYQGSVMTNTHIKGYSDIDLLVISDKFYTLDERNIIENLEVNKFSLSQEKIQKLQQELLGKKYHSATNDLKNNRLLSEQKLSSVYEICDITHPKAIKITNKSMGRDVDIVIANWYDDAQSVINNRQIEYRGIQIYNKRSNTIENRDFPFLSIQRINKRSSETKGRLKKMIRFLKNLKADSDEKIELSSFDINAICYNIEKNKYLHSNKYQLVPILYEQLNELVSNSNKINSLKSVDGHEYIFSRNNIDKKESLKMLLQEVKIIYSNLQSYL</sequence>
<comment type="function">
    <text evidence="1 2 5">Cyclic nucleotide synthase (second messenger synthase) of a CBASS antivirus system (PubMed:32877915). CBASS (cyclic oligonucleotide-based antiphage signaling system) provides immunity against bacteriophage. The CD-NTase protein synthesizes cyclic nucleotides in response to infection; these serve as specific second messenger signals. The signals activate a diverse range of effectors, leading to bacterial cell death and thus abortive phage infection. A type I-D(GG) CBASS system (PubMed:32839535).</text>
</comment>
<comment type="function">
    <text evidence="1">Cyclic dinucleotide synthase that catalyzes the synthesis of c-di-GMP, has no activity with other NTP substrates.</text>
</comment>
<comment type="catalytic activity">
    <reaction evidence="1">
        <text>2 GTP = 3',3'-c-di-GMP + 2 diphosphate</text>
        <dbReference type="Rhea" id="RHEA:24898"/>
        <dbReference type="ChEBI" id="CHEBI:33019"/>
        <dbReference type="ChEBI" id="CHEBI:37565"/>
        <dbReference type="ChEBI" id="CHEBI:58805"/>
        <dbReference type="EC" id="2.7.7.65"/>
    </reaction>
</comment>
<comment type="miscellaneous">
    <text evidence="5">Bacteria with this enzyme do not have other c-di-GMP synthase enzymes (no GGDEF or EAL-domain containing proteins), suggesting this second messenger has been co-opted for CBASS signaling via STING activation.</text>
</comment>
<comment type="similarity">
    <text evidence="4">Belongs to the CD-NTase family. E05 subfamily.</text>
</comment>
<gene>
    <name type="primary">cdnE</name>
    <name type="ORF">NCTC12948_02564</name>
</gene>
<accession>A0A381HBN1</accession>
<feature type="chain" id="PRO_0000451884" description="c-di-GMP synthase">
    <location>
        <begin position="1"/>
        <end position="351"/>
    </location>
</feature>
<feature type="helix" evidence="7">
    <location>
        <begin position="6"/>
        <end position="17"/>
    </location>
</feature>
<feature type="helix" evidence="7">
    <location>
        <begin position="23"/>
        <end position="32"/>
    </location>
</feature>
<feature type="helix" evidence="7">
    <location>
        <begin position="34"/>
        <end position="36"/>
    </location>
</feature>
<feature type="helix" evidence="7">
    <location>
        <begin position="40"/>
        <end position="49"/>
    </location>
</feature>
<feature type="helix" evidence="7">
    <location>
        <begin position="54"/>
        <end position="71"/>
    </location>
</feature>
<feature type="turn" evidence="7">
    <location>
        <begin position="72"/>
        <end position="74"/>
    </location>
</feature>
<feature type="strand" evidence="7">
    <location>
        <begin position="77"/>
        <end position="84"/>
    </location>
</feature>
<feature type="helix" evidence="7">
    <location>
        <begin position="85"/>
        <end position="88"/>
    </location>
</feature>
<feature type="strand" evidence="7">
    <location>
        <begin position="98"/>
        <end position="104"/>
    </location>
</feature>
<feature type="helix" evidence="7">
    <location>
        <begin position="147"/>
        <end position="164"/>
    </location>
</feature>
<feature type="strand" evidence="7">
    <location>
        <begin position="166"/>
        <end position="169"/>
    </location>
</feature>
<feature type="strand" evidence="7">
    <location>
        <begin position="176"/>
        <end position="180"/>
    </location>
</feature>
<feature type="turn" evidence="7">
    <location>
        <begin position="181"/>
        <end position="184"/>
    </location>
</feature>
<feature type="strand" evidence="7">
    <location>
        <begin position="185"/>
        <end position="194"/>
    </location>
</feature>
<feature type="strand" evidence="7">
    <location>
        <begin position="212"/>
        <end position="216"/>
    </location>
</feature>
<feature type="turn" evidence="7">
    <location>
        <begin position="217"/>
        <end position="220"/>
    </location>
</feature>
<feature type="strand" evidence="7">
    <location>
        <begin position="221"/>
        <end position="226"/>
    </location>
</feature>
<feature type="helix" evidence="7">
    <location>
        <begin position="228"/>
        <end position="241"/>
    </location>
</feature>
<feature type="turn" evidence="7">
    <location>
        <begin position="242"/>
        <end position="244"/>
    </location>
</feature>
<feature type="helix" evidence="7">
    <location>
        <begin position="245"/>
        <end position="259"/>
    </location>
</feature>
<feature type="helix" evidence="7">
    <location>
        <begin position="268"/>
        <end position="276"/>
    </location>
</feature>
<feature type="helix" evidence="7">
    <location>
        <begin position="280"/>
        <end position="282"/>
    </location>
</feature>
<feature type="turn" evidence="7">
    <location>
        <begin position="283"/>
        <end position="285"/>
    </location>
</feature>
<feature type="turn" evidence="7">
    <location>
        <begin position="288"/>
        <end position="290"/>
    </location>
</feature>
<feature type="helix" evidence="7">
    <location>
        <begin position="291"/>
        <end position="304"/>
    </location>
</feature>
<feature type="helix" evidence="7">
    <location>
        <begin position="306"/>
        <end position="310"/>
    </location>
</feature>
<feature type="strand" evidence="7">
    <location>
        <begin position="317"/>
        <end position="321"/>
    </location>
</feature>
<feature type="helix" evidence="7">
    <location>
        <begin position="327"/>
        <end position="347"/>
    </location>
</feature>
<feature type="helix" evidence="7">
    <location>
        <begin position="348"/>
        <end position="350"/>
    </location>
</feature>